<accession>Q5HQ99</accession>
<evidence type="ECO:0000255" key="1">
    <source>
        <dbReference type="HAMAP-Rule" id="MF_00741"/>
    </source>
</evidence>
<organism>
    <name type="scientific">Staphylococcus epidermidis (strain ATCC 35984 / DSM 28319 / BCRC 17069 / CCUG 31568 / BM 3577 / RP62A)</name>
    <dbReference type="NCBI Taxonomy" id="176279"/>
    <lineage>
        <taxon>Bacteria</taxon>
        <taxon>Bacillati</taxon>
        <taxon>Bacillota</taxon>
        <taxon>Bacilli</taxon>
        <taxon>Bacillales</taxon>
        <taxon>Staphylococcaceae</taxon>
        <taxon>Staphylococcus</taxon>
    </lineage>
</organism>
<comment type="catalytic activity">
    <reaction evidence="1">
        <text>2-formamido-N(1)-(5-O-phospho-beta-D-ribosyl)acetamidine + ATP = 5-amino-1-(5-phospho-beta-D-ribosyl)imidazole + ADP + phosphate + H(+)</text>
        <dbReference type="Rhea" id="RHEA:23032"/>
        <dbReference type="ChEBI" id="CHEBI:15378"/>
        <dbReference type="ChEBI" id="CHEBI:30616"/>
        <dbReference type="ChEBI" id="CHEBI:43474"/>
        <dbReference type="ChEBI" id="CHEBI:137981"/>
        <dbReference type="ChEBI" id="CHEBI:147287"/>
        <dbReference type="ChEBI" id="CHEBI:456216"/>
        <dbReference type="EC" id="6.3.3.1"/>
    </reaction>
</comment>
<comment type="pathway">
    <text evidence="1">Purine metabolism; IMP biosynthesis via de novo pathway; 5-amino-1-(5-phospho-D-ribosyl)imidazole from N(2)-formyl-N(1)-(5-phospho-D-ribosyl)glycinamide: step 2/2.</text>
</comment>
<comment type="subcellular location">
    <subcellularLocation>
        <location evidence="1">Cytoplasm</location>
    </subcellularLocation>
</comment>
<comment type="similarity">
    <text evidence="1">Belongs to the AIR synthase family.</text>
</comment>
<keyword id="KW-0067">ATP-binding</keyword>
<keyword id="KW-0963">Cytoplasm</keyword>
<keyword id="KW-0436">Ligase</keyword>
<keyword id="KW-0547">Nucleotide-binding</keyword>
<keyword id="KW-0658">Purine biosynthesis</keyword>
<keyword id="KW-1185">Reference proteome</keyword>
<dbReference type="EC" id="6.3.3.1" evidence="1"/>
<dbReference type="EMBL" id="CP000029">
    <property type="protein sequence ID" value="AAW54009.1"/>
    <property type="molecule type" value="Genomic_DNA"/>
</dbReference>
<dbReference type="RefSeq" id="WP_001831685.1">
    <property type="nucleotide sequence ID" value="NC_002976.3"/>
</dbReference>
<dbReference type="SMR" id="Q5HQ99"/>
<dbReference type="STRING" id="176279.SERP0656"/>
<dbReference type="GeneID" id="50019091"/>
<dbReference type="KEGG" id="ser:SERP0656"/>
<dbReference type="eggNOG" id="COG0150">
    <property type="taxonomic scope" value="Bacteria"/>
</dbReference>
<dbReference type="HOGENOM" id="CLU_047116_0_0_9"/>
<dbReference type="UniPathway" id="UPA00074">
    <property type="reaction ID" value="UER00129"/>
</dbReference>
<dbReference type="Proteomes" id="UP000000531">
    <property type="component" value="Chromosome"/>
</dbReference>
<dbReference type="GO" id="GO:0005829">
    <property type="term" value="C:cytosol"/>
    <property type="evidence" value="ECO:0007669"/>
    <property type="project" value="TreeGrafter"/>
</dbReference>
<dbReference type="GO" id="GO:0005524">
    <property type="term" value="F:ATP binding"/>
    <property type="evidence" value="ECO:0007669"/>
    <property type="project" value="UniProtKB-KW"/>
</dbReference>
<dbReference type="GO" id="GO:0004637">
    <property type="term" value="F:phosphoribosylamine-glycine ligase activity"/>
    <property type="evidence" value="ECO:0007669"/>
    <property type="project" value="TreeGrafter"/>
</dbReference>
<dbReference type="GO" id="GO:0004641">
    <property type="term" value="F:phosphoribosylformylglycinamidine cyclo-ligase activity"/>
    <property type="evidence" value="ECO:0007669"/>
    <property type="project" value="UniProtKB-UniRule"/>
</dbReference>
<dbReference type="GO" id="GO:0006189">
    <property type="term" value="P:'de novo' IMP biosynthetic process"/>
    <property type="evidence" value="ECO:0007669"/>
    <property type="project" value="UniProtKB-UniRule"/>
</dbReference>
<dbReference type="GO" id="GO:0046084">
    <property type="term" value="P:adenine biosynthetic process"/>
    <property type="evidence" value="ECO:0007669"/>
    <property type="project" value="TreeGrafter"/>
</dbReference>
<dbReference type="CDD" id="cd02196">
    <property type="entry name" value="PurM"/>
    <property type="match status" value="1"/>
</dbReference>
<dbReference type="FunFam" id="3.30.1330.10:FF:000001">
    <property type="entry name" value="Phosphoribosylformylglycinamidine cyclo-ligase"/>
    <property type="match status" value="1"/>
</dbReference>
<dbReference type="FunFam" id="3.90.650.10:FF:000001">
    <property type="entry name" value="Phosphoribosylformylglycinamidine cyclo-ligase"/>
    <property type="match status" value="1"/>
</dbReference>
<dbReference type="Gene3D" id="3.90.650.10">
    <property type="entry name" value="PurM-like C-terminal domain"/>
    <property type="match status" value="1"/>
</dbReference>
<dbReference type="Gene3D" id="3.30.1330.10">
    <property type="entry name" value="PurM-like, N-terminal domain"/>
    <property type="match status" value="1"/>
</dbReference>
<dbReference type="HAMAP" id="MF_00741">
    <property type="entry name" value="AIRS"/>
    <property type="match status" value="1"/>
</dbReference>
<dbReference type="InterPro" id="IPR010918">
    <property type="entry name" value="PurM-like_C_dom"/>
</dbReference>
<dbReference type="InterPro" id="IPR036676">
    <property type="entry name" value="PurM-like_C_sf"/>
</dbReference>
<dbReference type="InterPro" id="IPR016188">
    <property type="entry name" value="PurM-like_N"/>
</dbReference>
<dbReference type="InterPro" id="IPR036921">
    <property type="entry name" value="PurM-like_N_sf"/>
</dbReference>
<dbReference type="InterPro" id="IPR004733">
    <property type="entry name" value="PurM_cligase"/>
</dbReference>
<dbReference type="NCBIfam" id="TIGR00878">
    <property type="entry name" value="purM"/>
    <property type="match status" value="1"/>
</dbReference>
<dbReference type="PANTHER" id="PTHR10520:SF12">
    <property type="entry name" value="TRIFUNCTIONAL PURINE BIOSYNTHETIC PROTEIN ADENOSINE-3"/>
    <property type="match status" value="1"/>
</dbReference>
<dbReference type="PANTHER" id="PTHR10520">
    <property type="entry name" value="TRIFUNCTIONAL PURINE BIOSYNTHETIC PROTEIN ADENOSINE-3-RELATED"/>
    <property type="match status" value="1"/>
</dbReference>
<dbReference type="Pfam" id="PF00586">
    <property type="entry name" value="AIRS"/>
    <property type="match status" value="1"/>
</dbReference>
<dbReference type="Pfam" id="PF02769">
    <property type="entry name" value="AIRS_C"/>
    <property type="match status" value="1"/>
</dbReference>
<dbReference type="SUPFAM" id="SSF56042">
    <property type="entry name" value="PurM C-terminal domain-like"/>
    <property type="match status" value="1"/>
</dbReference>
<dbReference type="SUPFAM" id="SSF55326">
    <property type="entry name" value="PurM N-terminal domain-like"/>
    <property type="match status" value="1"/>
</dbReference>
<feature type="chain" id="PRO_0000148252" description="Phosphoribosylformylglycinamidine cyclo-ligase">
    <location>
        <begin position="1"/>
        <end position="343"/>
    </location>
</feature>
<reference key="1">
    <citation type="journal article" date="2005" name="J. Bacteriol.">
        <title>Insights on evolution of virulence and resistance from the complete genome analysis of an early methicillin-resistant Staphylococcus aureus strain and a biofilm-producing methicillin-resistant Staphylococcus epidermidis strain.</title>
        <authorList>
            <person name="Gill S.R."/>
            <person name="Fouts D.E."/>
            <person name="Archer G.L."/>
            <person name="Mongodin E.F."/>
            <person name="DeBoy R.T."/>
            <person name="Ravel J."/>
            <person name="Paulsen I.T."/>
            <person name="Kolonay J.F."/>
            <person name="Brinkac L.M."/>
            <person name="Beanan M.J."/>
            <person name="Dodson R.J."/>
            <person name="Daugherty S.C."/>
            <person name="Madupu R."/>
            <person name="Angiuoli S.V."/>
            <person name="Durkin A.S."/>
            <person name="Haft D.H."/>
            <person name="Vamathevan J.J."/>
            <person name="Khouri H."/>
            <person name="Utterback T.R."/>
            <person name="Lee C."/>
            <person name="Dimitrov G."/>
            <person name="Jiang L."/>
            <person name="Qin H."/>
            <person name="Weidman J."/>
            <person name="Tran K."/>
            <person name="Kang K.H."/>
            <person name="Hance I.R."/>
            <person name="Nelson K.E."/>
            <person name="Fraser C.M."/>
        </authorList>
    </citation>
    <scope>NUCLEOTIDE SEQUENCE [LARGE SCALE GENOMIC DNA]</scope>
    <source>
        <strain>ATCC 35984 / DSM 28319 / BCRC 17069 / CCUG 31568 / BM 3577 / RP62A</strain>
    </source>
</reference>
<proteinExistence type="inferred from homology"/>
<name>PUR5_STAEQ</name>
<sequence length="343" mass="37391">MSKAYEESGVNIQAGYEAVERITSHVERTLRKEVLGGLGGFGATFDLSQLKMKAPVLVSGTDGVGTKLKLAIDYGKHDTIGIDAVAMCVNDILTTGAEPLYFLDYIATNKVVPSTIEQIVKGISDGCEQTNTALIGGETAEMGEMYHEGEYDIAGFAVGAVEKEDYIDGSNVEEGQAIIGLASSGIHSNGYSLVRKMIKESGVQLHDQFNGQTFLETFLAPTKLYVKPILELKKHIDIKAMSHITGGGFYENIPRALPKGLSAKIDTQSFPTLEVFNWLQKQGNISTNEMYNIFNMGIGYTIIVDKKDVQTTLTTLRAMDTTAYEIGEIIKDDDTPIHLLEVE</sequence>
<protein>
    <recommendedName>
        <fullName evidence="1">Phosphoribosylformylglycinamidine cyclo-ligase</fullName>
        <ecNumber evidence="1">6.3.3.1</ecNumber>
    </recommendedName>
    <alternativeName>
        <fullName evidence="1">AIR synthase</fullName>
    </alternativeName>
    <alternativeName>
        <fullName evidence="1">AIRS</fullName>
    </alternativeName>
    <alternativeName>
        <fullName evidence="1">Phosphoribosyl-aminoimidazole synthetase</fullName>
    </alternativeName>
</protein>
<gene>
    <name evidence="1" type="primary">purM</name>
    <name type="ordered locus">SERP0656</name>
</gene>